<proteinExistence type="inferred from homology"/>
<feature type="chain" id="PRO_0000151892" description="ATP phosphoribosyltransferase">
    <location>
        <begin position="1"/>
        <end position="214"/>
    </location>
</feature>
<dbReference type="EC" id="2.4.2.17"/>
<dbReference type="EMBL" id="BA000019">
    <property type="protein sequence ID" value="BAB73664.1"/>
    <property type="molecule type" value="Genomic_DNA"/>
</dbReference>
<dbReference type="PIR" id="AG2051">
    <property type="entry name" value="AG2051"/>
</dbReference>
<dbReference type="RefSeq" id="WP_010996129.1">
    <property type="nucleotide sequence ID" value="NZ_RSCN01000031.1"/>
</dbReference>
<dbReference type="SMR" id="Q8YVL0"/>
<dbReference type="STRING" id="103690.gene:10493984"/>
<dbReference type="KEGG" id="ana:alr1965"/>
<dbReference type="eggNOG" id="COG0040">
    <property type="taxonomic scope" value="Bacteria"/>
</dbReference>
<dbReference type="OrthoDB" id="9801867at2"/>
<dbReference type="UniPathway" id="UPA00031">
    <property type="reaction ID" value="UER00006"/>
</dbReference>
<dbReference type="Proteomes" id="UP000002483">
    <property type="component" value="Chromosome"/>
</dbReference>
<dbReference type="GO" id="GO:0005737">
    <property type="term" value="C:cytoplasm"/>
    <property type="evidence" value="ECO:0007669"/>
    <property type="project" value="UniProtKB-SubCell"/>
</dbReference>
<dbReference type="GO" id="GO:0005524">
    <property type="term" value="F:ATP binding"/>
    <property type="evidence" value="ECO:0007669"/>
    <property type="project" value="UniProtKB-KW"/>
</dbReference>
<dbReference type="GO" id="GO:0003879">
    <property type="term" value="F:ATP phosphoribosyltransferase activity"/>
    <property type="evidence" value="ECO:0007669"/>
    <property type="project" value="UniProtKB-UniRule"/>
</dbReference>
<dbReference type="GO" id="GO:0000105">
    <property type="term" value="P:L-histidine biosynthetic process"/>
    <property type="evidence" value="ECO:0007669"/>
    <property type="project" value="UniProtKB-UniRule"/>
</dbReference>
<dbReference type="CDD" id="cd13595">
    <property type="entry name" value="PBP2_HisGs"/>
    <property type="match status" value="1"/>
</dbReference>
<dbReference type="FunFam" id="3.40.190.10:FF:000008">
    <property type="entry name" value="ATP phosphoribosyltransferase"/>
    <property type="match status" value="1"/>
</dbReference>
<dbReference type="Gene3D" id="3.40.190.10">
    <property type="entry name" value="Periplasmic binding protein-like II"/>
    <property type="match status" value="2"/>
</dbReference>
<dbReference type="HAMAP" id="MF_01018">
    <property type="entry name" value="HisG_Short"/>
    <property type="match status" value="1"/>
</dbReference>
<dbReference type="InterPro" id="IPR013820">
    <property type="entry name" value="ATP_PRibTrfase_cat"/>
</dbReference>
<dbReference type="InterPro" id="IPR018198">
    <property type="entry name" value="ATP_PRibTrfase_CS"/>
</dbReference>
<dbReference type="InterPro" id="IPR001348">
    <property type="entry name" value="ATP_PRibTrfase_HisG"/>
</dbReference>
<dbReference type="InterPro" id="IPR024893">
    <property type="entry name" value="ATP_PRibTrfase_HisG_short"/>
</dbReference>
<dbReference type="NCBIfam" id="TIGR00070">
    <property type="entry name" value="hisG"/>
    <property type="match status" value="1"/>
</dbReference>
<dbReference type="PANTHER" id="PTHR21403:SF8">
    <property type="entry name" value="ATP PHOSPHORIBOSYLTRANSFERASE"/>
    <property type="match status" value="1"/>
</dbReference>
<dbReference type="PANTHER" id="PTHR21403">
    <property type="entry name" value="ATP PHOSPHORIBOSYLTRANSFERASE ATP-PRTASE"/>
    <property type="match status" value="1"/>
</dbReference>
<dbReference type="Pfam" id="PF01634">
    <property type="entry name" value="HisG"/>
    <property type="match status" value="1"/>
</dbReference>
<dbReference type="SUPFAM" id="SSF53850">
    <property type="entry name" value="Periplasmic binding protein-like II"/>
    <property type="match status" value="1"/>
</dbReference>
<dbReference type="PROSITE" id="PS01316">
    <property type="entry name" value="ATP_P_PHORIBOSYLTR"/>
    <property type="match status" value="1"/>
</dbReference>
<comment type="function">
    <text evidence="1">Catalyzes the condensation of ATP and 5-phosphoribose 1-diphosphate to form N'-(5'-phosphoribosyl)-ATP (PR-ATP). Has a crucial role in the pathway because the rate of histidine biosynthesis seems to be controlled primarily by regulation of HisG enzymatic activity (By similarity).</text>
</comment>
<comment type="catalytic activity">
    <reaction>
        <text>1-(5-phospho-beta-D-ribosyl)-ATP + diphosphate = 5-phospho-alpha-D-ribose 1-diphosphate + ATP</text>
        <dbReference type="Rhea" id="RHEA:18473"/>
        <dbReference type="ChEBI" id="CHEBI:30616"/>
        <dbReference type="ChEBI" id="CHEBI:33019"/>
        <dbReference type="ChEBI" id="CHEBI:58017"/>
        <dbReference type="ChEBI" id="CHEBI:73183"/>
        <dbReference type="EC" id="2.4.2.17"/>
    </reaction>
</comment>
<comment type="pathway">
    <text>Amino-acid biosynthesis; L-histidine biosynthesis; L-histidine from 5-phospho-alpha-D-ribose 1-diphosphate: step 1/9.</text>
</comment>
<comment type="subunit">
    <text evidence="1">Heteromultimer composed of HisG and HisZ subunits.</text>
</comment>
<comment type="subcellular location">
    <subcellularLocation>
        <location evidence="1">Cytoplasm</location>
    </subcellularLocation>
</comment>
<comment type="domain">
    <text>Lacks the C-terminal regulatory region which is replaced by HisZ.</text>
</comment>
<comment type="similarity">
    <text evidence="2">Belongs to the ATP phosphoribosyltransferase family. Short subfamily.</text>
</comment>
<sequence>MLTVALPKGELLKNSIRLLQSVGLDFSAFLDSGNRQLQITDASGTAKGLLVRGQDVPVYVEYGQAQIGIIGYDVLREKQPQVAHLVDLQFGYCRMSVAVKASSPYKSPLDLPAHSRVASKYVNSAREFFQGLDLPVEIVPLYGSVELGPITGMSEAIVDIVSTGRTLKENGLVEITTLYESTARLIAHPLSYRLNTGNLHQLVEQLREGALTKV</sequence>
<gene>
    <name type="primary">hisG</name>
    <name type="ordered locus">alr1965</name>
</gene>
<evidence type="ECO:0000250" key="1"/>
<evidence type="ECO:0000305" key="2"/>
<reference key="1">
    <citation type="journal article" date="2001" name="DNA Res.">
        <title>Complete genomic sequence of the filamentous nitrogen-fixing cyanobacterium Anabaena sp. strain PCC 7120.</title>
        <authorList>
            <person name="Kaneko T."/>
            <person name="Nakamura Y."/>
            <person name="Wolk C.P."/>
            <person name="Kuritz T."/>
            <person name="Sasamoto S."/>
            <person name="Watanabe A."/>
            <person name="Iriguchi M."/>
            <person name="Ishikawa A."/>
            <person name="Kawashima K."/>
            <person name="Kimura T."/>
            <person name="Kishida Y."/>
            <person name="Kohara M."/>
            <person name="Matsumoto M."/>
            <person name="Matsuno A."/>
            <person name="Muraki A."/>
            <person name="Nakazaki N."/>
            <person name="Shimpo S."/>
            <person name="Sugimoto M."/>
            <person name="Takazawa M."/>
            <person name="Yamada M."/>
            <person name="Yasuda M."/>
            <person name="Tabata S."/>
        </authorList>
    </citation>
    <scope>NUCLEOTIDE SEQUENCE [LARGE SCALE GENOMIC DNA]</scope>
    <source>
        <strain>PCC 7120 / SAG 25.82 / UTEX 2576</strain>
    </source>
</reference>
<name>HIS1_NOSS1</name>
<keyword id="KW-0028">Amino-acid biosynthesis</keyword>
<keyword id="KW-0067">ATP-binding</keyword>
<keyword id="KW-0963">Cytoplasm</keyword>
<keyword id="KW-0328">Glycosyltransferase</keyword>
<keyword id="KW-0368">Histidine biosynthesis</keyword>
<keyword id="KW-0547">Nucleotide-binding</keyword>
<keyword id="KW-1185">Reference proteome</keyword>
<keyword id="KW-0808">Transferase</keyword>
<organism>
    <name type="scientific">Nostoc sp. (strain PCC 7120 / SAG 25.82 / UTEX 2576)</name>
    <dbReference type="NCBI Taxonomy" id="103690"/>
    <lineage>
        <taxon>Bacteria</taxon>
        <taxon>Bacillati</taxon>
        <taxon>Cyanobacteriota</taxon>
        <taxon>Cyanophyceae</taxon>
        <taxon>Nostocales</taxon>
        <taxon>Nostocaceae</taxon>
        <taxon>Nostoc</taxon>
    </lineage>
</organism>
<accession>Q8YVL0</accession>
<protein>
    <recommendedName>
        <fullName>ATP phosphoribosyltransferase</fullName>
        <shortName>ATP-PRT</shortName>
        <shortName>ATP-PRTase</shortName>
        <ecNumber>2.4.2.17</ecNumber>
    </recommendedName>
</protein>